<gene>
    <name evidence="1" type="primary">atpF</name>
    <name type="ordered locus">Haur_4068</name>
</gene>
<accession>A9AVV0</accession>
<comment type="function">
    <text evidence="1">F(1)F(0) ATP synthase produces ATP from ADP in the presence of a proton or sodium gradient. F-type ATPases consist of two structural domains, F(1) containing the extramembraneous catalytic core and F(0) containing the membrane proton channel, linked together by a central stalk and a peripheral stalk. During catalysis, ATP synthesis in the catalytic domain of F(1) is coupled via a rotary mechanism of the central stalk subunits to proton translocation.</text>
</comment>
<comment type="function">
    <text evidence="1">Component of the F(0) channel, it forms part of the peripheral stalk, linking F(1) to F(0).</text>
</comment>
<comment type="subunit">
    <text evidence="1">F-type ATPases have 2 components, F(1) - the catalytic core - and F(0) - the membrane proton channel. F(1) has five subunits: alpha(3), beta(3), gamma(1), delta(1), epsilon(1). F(0) has three main subunits: a(1), b(2) and c(10-14). The alpha and beta chains form an alternating ring which encloses part of the gamma chain. F(1) is attached to F(0) by a central stalk formed by the gamma and epsilon chains, while a peripheral stalk is formed by the delta and b chains.</text>
</comment>
<comment type="subcellular location">
    <subcellularLocation>
        <location evidence="1">Cell membrane</location>
        <topology evidence="1">Single-pass membrane protein</topology>
    </subcellularLocation>
</comment>
<comment type="similarity">
    <text evidence="1">Belongs to the ATPase B chain family.</text>
</comment>
<feature type="chain" id="PRO_0000368527" description="ATP synthase subunit b">
    <location>
        <begin position="1"/>
        <end position="164"/>
    </location>
</feature>
<feature type="transmembrane region" description="Helical" evidence="1">
    <location>
        <begin position="10"/>
        <end position="30"/>
    </location>
</feature>
<proteinExistence type="inferred from homology"/>
<organism>
    <name type="scientific">Herpetosiphon aurantiacus (strain ATCC 23779 / DSM 785 / 114-95)</name>
    <dbReference type="NCBI Taxonomy" id="316274"/>
    <lineage>
        <taxon>Bacteria</taxon>
        <taxon>Bacillati</taxon>
        <taxon>Chloroflexota</taxon>
        <taxon>Chloroflexia</taxon>
        <taxon>Herpetosiphonales</taxon>
        <taxon>Herpetosiphonaceae</taxon>
        <taxon>Herpetosiphon</taxon>
    </lineage>
</organism>
<name>ATPF_HERA2</name>
<sequence>MDKLGVDLPLLISQIVNFCLLAFLLNTFLYKPVLNALQARSERIRESLDNAEKVKQQLARVDADYEAKLQEARREGQTIISQAQERARAQEAELLVVARNNAAKIEEEARGKVEQERQQVLRGLQGQLASLVTETASNVLGRELQTKGHDELINKSIDQLGRLN</sequence>
<keyword id="KW-0066">ATP synthesis</keyword>
<keyword id="KW-1003">Cell membrane</keyword>
<keyword id="KW-0138">CF(0)</keyword>
<keyword id="KW-0375">Hydrogen ion transport</keyword>
<keyword id="KW-0406">Ion transport</keyword>
<keyword id="KW-0472">Membrane</keyword>
<keyword id="KW-0812">Transmembrane</keyword>
<keyword id="KW-1133">Transmembrane helix</keyword>
<keyword id="KW-0813">Transport</keyword>
<evidence type="ECO:0000255" key="1">
    <source>
        <dbReference type="HAMAP-Rule" id="MF_01398"/>
    </source>
</evidence>
<protein>
    <recommendedName>
        <fullName evidence="1">ATP synthase subunit b</fullName>
    </recommendedName>
    <alternativeName>
        <fullName evidence="1">ATP synthase F(0) sector subunit b</fullName>
    </alternativeName>
    <alternativeName>
        <fullName evidence="1">ATPase subunit I</fullName>
    </alternativeName>
    <alternativeName>
        <fullName evidence="1">F-type ATPase subunit b</fullName>
        <shortName evidence="1">F-ATPase subunit b</shortName>
    </alternativeName>
</protein>
<reference key="1">
    <citation type="journal article" date="2011" name="Stand. Genomic Sci.">
        <title>Complete genome sequence of the filamentous gliding predatory bacterium Herpetosiphon aurantiacus type strain (114-95(T)).</title>
        <authorList>
            <person name="Kiss H."/>
            <person name="Nett M."/>
            <person name="Domin N."/>
            <person name="Martin K."/>
            <person name="Maresca J.A."/>
            <person name="Copeland A."/>
            <person name="Lapidus A."/>
            <person name="Lucas S."/>
            <person name="Berry K.W."/>
            <person name="Glavina Del Rio T."/>
            <person name="Dalin E."/>
            <person name="Tice H."/>
            <person name="Pitluck S."/>
            <person name="Richardson P."/>
            <person name="Bruce D."/>
            <person name="Goodwin L."/>
            <person name="Han C."/>
            <person name="Detter J.C."/>
            <person name="Schmutz J."/>
            <person name="Brettin T."/>
            <person name="Land M."/>
            <person name="Hauser L."/>
            <person name="Kyrpides N.C."/>
            <person name="Ivanova N."/>
            <person name="Goeker M."/>
            <person name="Woyke T."/>
            <person name="Klenk H.P."/>
            <person name="Bryant D.A."/>
        </authorList>
    </citation>
    <scope>NUCLEOTIDE SEQUENCE [LARGE SCALE GENOMIC DNA]</scope>
    <source>
        <strain>ATCC 23779 / DSM 785 / 114-95</strain>
    </source>
</reference>
<dbReference type="EMBL" id="CP000875">
    <property type="protein sequence ID" value="ABX06700.1"/>
    <property type="molecule type" value="Genomic_DNA"/>
</dbReference>
<dbReference type="SMR" id="A9AVV0"/>
<dbReference type="FunCoup" id="A9AVV0">
    <property type="interactions" value="82"/>
</dbReference>
<dbReference type="STRING" id="316274.Haur_4068"/>
<dbReference type="KEGG" id="hau:Haur_4068"/>
<dbReference type="eggNOG" id="COG0711">
    <property type="taxonomic scope" value="Bacteria"/>
</dbReference>
<dbReference type="HOGENOM" id="CLU_079215_4_4_0"/>
<dbReference type="InParanoid" id="A9AVV0"/>
<dbReference type="Proteomes" id="UP000000787">
    <property type="component" value="Chromosome"/>
</dbReference>
<dbReference type="GO" id="GO:0005886">
    <property type="term" value="C:plasma membrane"/>
    <property type="evidence" value="ECO:0007669"/>
    <property type="project" value="UniProtKB-SubCell"/>
</dbReference>
<dbReference type="GO" id="GO:0045259">
    <property type="term" value="C:proton-transporting ATP synthase complex"/>
    <property type="evidence" value="ECO:0007669"/>
    <property type="project" value="UniProtKB-KW"/>
</dbReference>
<dbReference type="GO" id="GO:0046933">
    <property type="term" value="F:proton-transporting ATP synthase activity, rotational mechanism"/>
    <property type="evidence" value="ECO:0007669"/>
    <property type="project" value="UniProtKB-UniRule"/>
</dbReference>
<dbReference type="GO" id="GO:0046961">
    <property type="term" value="F:proton-transporting ATPase activity, rotational mechanism"/>
    <property type="evidence" value="ECO:0007669"/>
    <property type="project" value="TreeGrafter"/>
</dbReference>
<dbReference type="CDD" id="cd06503">
    <property type="entry name" value="ATP-synt_Fo_b"/>
    <property type="match status" value="1"/>
</dbReference>
<dbReference type="Gene3D" id="6.10.250.1580">
    <property type="match status" value="1"/>
</dbReference>
<dbReference type="HAMAP" id="MF_01398">
    <property type="entry name" value="ATP_synth_b_bprime"/>
    <property type="match status" value="1"/>
</dbReference>
<dbReference type="InterPro" id="IPR028987">
    <property type="entry name" value="ATP_synth_B-like_membr_sf"/>
</dbReference>
<dbReference type="InterPro" id="IPR002146">
    <property type="entry name" value="ATP_synth_b/b'su_bac/chlpt"/>
</dbReference>
<dbReference type="InterPro" id="IPR005864">
    <property type="entry name" value="ATP_synth_F0_bsu_bac"/>
</dbReference>
<dbReference type="InterPro" id="IPR050059">
    <property type="entry name" value="ATP_synthase_B_chain"/>
</dbReference>
<dbReference type="NCBIfam" id="TIGR01144">
    <property type="entry name" value="ATP_synt_b"/>
    <property type="match status" value="1"/>
</dbReference>
<dbReference type="NCBIfam" id="NF011043">
    <property type="entry name" value="PRK14473.1"/>
    <property type="match status" value="1"/>
</dbReference>
<dbReference type="PANTHER" id="PTHR33445:SF1">
    <property type="entry name" value="ATP SYNTHASE SUBUNIT B"/>
    <property type="match status" value="1"/>
</dbReference>
<dbReference type="PANTHER" id="PTHR33445">
    <property type="entry name" value="ATP SYNTHASE SUBUNIT B', CHLOROPLASTIC"/>
    <property type="match status" value="1"/>
</dbReference>
<dbReference type="Pfam" id="PF00430">
    <property type="entry name" value="ATP-synt_B"/>
    <property type="match status" value="1"/>
</dbReference>
<dbReference type="SUPFAM" id="SSF81573">
    <property type="entry name" value="F1F0 ATP synthase subunit B, membrane domain"/>
    <property type="match status" value="1"/>
</dbReference>